<dbReference type="EC" id="2.7.13.3"/>
<dbReference type="EMBL" id="AJ131213">
    <property type="protein sequence ID" value="CAA10326.1"/>
    <property type="molecule type" value="Genomic_DNA"/>
</dbReference>
<dbReference type="EMBL" id="AL939116">
    <property type="protein sequence ID" value="CAB40859.1"/>
    <property type="molecule type" value="Genomic_DNA"/>
</dbReference>
<dbReference type="PIR" id="T36370">
    <property type="entry name" value="T36370"/>
</dbReference>
<dbReference type="RefSeq" id="NP_627567.1">
    <property type="nucleotide sequence ID" value="NC_003888.3"/>
</dbReference>
<dbReference type="RefSeq" id="WP_011028932.1">
    <property type="nucleotide sequence ID" value="NZ_VNID01000023.1"/>
</dbReference>
<dbReference type="SMR" id="Q9ZEP3"/>
<dbReference type="STRING" id="100226.gene:17760981"/>
<dbReference type="PaxDb" id="100226-SCO3359"/>
<dbReference type="KEGG" id="sco:SCO3359"/>
<dbReference type="PATRIC" id="fig|100226.15.peg.3421"/>
<dbReference type="eggNOG" id="COG2205">
    <property type="taxonomic scope" value="Bacteria"/>
</dbReference>
<dbReference type="HOGENOM" id="CLU_000445_89_4_11"/>
<dbReference type="InParanoid" id="Q9ZEP3"/>
<dbReference type="OrthoDB" id="9786919at2"/>
<dbReference type="PhylomeDB" id="Q9ZEP3"/>
<dbReference type="Proteomes" id="UP000001973">
    <property type="component" value="Chromosome"/>
</dbReference>
<dbReference type="GO" id="GO:0005886">
    <property type="term" value="C:plasma membrane"/>
    <property type="evidence" value="ECO:0007669"/>
    <property type="project" value="UniProtKB-SubCell"/>
</dbReference>
<dbReference type="GO" id="GO:0005524">
    <property type="term" value="F:ATP binding"/>
    <property type="evidence" value="ECO:0007669"/>
    <property type="project" value="UniProtKB-KW"/>
</dbReference>
<dbReference type="GO" id="GO:0000155">
    <property type="term" value="F:phosphorelay sensor kinase activity"/>
    <property type="evidence" value="ECO:0000318"/>
    <property type="project" value="GO_Central"/>
</dbReference>
<dbReference type="CDD" id="cd00075">
    <property type="entry name" value="HATPase"/>
    <property type="match status" value="1"/>
</dbReference>
<dbReference type="CDD" id="cd00082">
    <property type="entry name" value="HisKA"/>
    <property type="match status" value="1"/>
</dbReference>
<dbReference type="FunFam" id="1.10.287.130:FF:000012">
    <property type="entry name" value="Histidine kinase"/>
    <property type="match status" value="1"/>
</dbReference>
<dbReference type="FunFam" id="3.30.565.10:FF:000089">
    <property type="entry name" value="Histidine kinase"/>
    <property type="match status" value="1"/>
</dbReference>
<dbReference type="Gene3D" id="1.10.287.130">
    <property type="match status" value="1"/>
</dbReference>
<dbReference type="Gene3D" id="6.10.340.10">
    <property type="match status" value="1"/>
</dbReference>
<dbReference type="Gene3D" id="3.30.565.10">
    <property type="entry name" value="Histidine kinase-like ATPase, C-terminal domain"/>
    <property type="match status" value="1"/>
</dbReference>
<dbReference type="InterPro" id="IPR050980">
    <property type="entry name" value="2C_sensor_his_kinase"/>
</dbReference>
<dbReference type="InterPro" id="IPR053469">
    <property type="entry name" value="Cell_env_sensor_kinase"/>
</dbReference>
<dbReference type="InterPro" id="IPR003660">
    <property type="entry name" value="HAMP_dom"/>
</dbReference>
<dbReference type="InterPro" id="IPR036890">
    <property type="entry name" value="HATPase_C_sf"/>
</dbReference>
<dbReference type="InterPro" id="IPR005467">
    <property type="entry name" value="His_kinase_dom"/>
</dbReference>
<dbReference type="InterPro" id="IPR003661">
    <property type="entry name" value="HisK_dim/P_dom"/>
</dbReference>
<dbReference type="InterPro" id="IPR036097">
    <property type="entry name" value="HisK_dim/P_sf"/>
</dbReference>
<dbReference type="NCBIfam" id="NF041732">
    <property type="entry name" value="hist_kin_CseC"/>
    <property type="match status" value="1"/>
</dbReference>
<dbReference type="PANTHER" id="PTHR44936">
    <property type="entry name" value="SENSOR PROTEIN CREC"/>
    <property type="match status" value="1"/>
</dbReference>
<dbReference type="PANTHER" id="PTHR44936:SF9">
    <property type="entry name" value="SENSOR PROTEIN CREC"/>
    <property type="match status" value="1"/>
</dbReference>
<dbReference type="Pfam" id="PF00672">
    <property type="entry name" value="HAMP"/>
    <property type="match status" value="1"/>
</dbReference>
<dbReference type="Pfam" id="PF02518">
    <property type="entry name" value="HATPase_c"/>
    <property type="match status" value="1"/>
</dbReference>
<dbReference type="Pfam" id="PF00512">
    <property type="entry name" value="HisKA"/>
    <property type="match status" value="1"/>
</dbReference>
<dbReference type="SMART" id="SM00304">
    <property type="entry name" value="HAMP"/>
    <property type="match status" value="1"/>
</dbReference>
<dbReference type="SMART" id="SM00387">
    <property type="entry name" value="HATPase_c"/>
    <property type="match status" value="1"/>
</dbReference>
<dbReference type="SMART" id="SM00388">
    <property type="entry name" value="HisKA"/>
    <property type="match status" value="1"/>
</dbReference>
<dbReference type="SUPFAM" id="SSF55874">
    <property type="entry name" value="ATPase domain of HSP90 chaperone/DNA topoisomerase II/histidine kinase"/>
    <property type="match status" value="1"/>
</dbReference>
<dbReference type="SUPFAM" id="SSF47384">
    <property type="entry name" value="Homodimeric domain of signal transducing histidine kinase"/>
    <property type="match status" value="1"/>
</dbReference>
<dbReference type="PROSITE" id="PS50885">
    <property type="entry name" value="HAMP"/>
    <property type="match status" value="1"/>
</dbReference>
<dbReference type="PROSITE" id="PS50109">
    <property type="entry name" value="HIS_KIN"/>
    <property type="match status" value="1"/>
</dbReference>
<sequence length="507" mass="54266">MRGFFRQRRSVSPPGHPYDRTGPGEHAGPGARTGPGGRPRVLGVRGLRARGIRTGLRWKLSAAIALVGALVAIALSLVVHNAARVSMLDNARDLADDRVLIAQRNYELSGRQNFPNAQIDDPALPPELRRKIDAGRRATYVSERPDGVTDIWAAVPLKDGHVMSLHSGFTDRSADILSDLDQALVIGSIAVVLGGSALGVLIGGQLSRRLREAAAAANRVASGEPDVRVRDAIGGVVRDETDDVARAVDAMADALQQRIEAERRVTADIAHELRTPVTGLLTAAELLPPGRPTELVLDRAKAMRTLVEDVLEVARLDGASERAELQDIMLGDFVSRRVAAKDPAVEVRVIHESEVTTDPRRLERVLFNLLANAARHGRSPVEVSVEGRVIRVRDHGPGFPEDLLAEGPSRFRTGSTDRAGRGHGLGLTIAAGQARVLGARLTFRNVRPAGAPAHIPAEGAVAVLWLPEHAPTNTGSYPMLPDRSKSGASSSARDMSREASQGMSRKP</sequence>
<proteinExistence type="evidence at protein level"/>
<evidence type="ECO:0000255" key="1"/>
<evidence type="ECO:0000255" key="2">
    <source>
        <dbReference type="PROSITE-ProRule" id="PRU00102"/>
    </source>
</evidence>
<evidence type="ECO:0000255" key="3">
    <source>
        <dbReference type="PROSITE-ProRule" id="PRU00107"/>
    </source>
</evidence>
<evidence type="ECO:0000256" key="4">
    <source>
        <dbReference type="SAM" id="MobiDB-lite"/>
    </source>
</evidence>
<evidence type="ECO:0000269" key="5">
    <source>
    </source>
</evidence>
<evidence type="ECO:0000305" key="6"/>
<accession>Q9ZEP3</accession>
<name>CSEC_STRCO</name>
<gene>
    <name type="primary">cseC</name>
    <name type="ordered locus">SCO3359</name>
    <name type="ORF">SCE94.10</name>
</gene>
<keyword id="KW-0067">ATP-binding</keyword>
<keyword id="KW-1003">Cell membrane</keyword>
<keyword id="KW-0418">Kinase</keyword>
<keyword id="KW-0472">Membrane</keyword>
<keyword id="KW-0547">Nucleotide-binding</keyword>
<keyword id="KW-0597">Phosphoprotein</keyword>
<keyword id="KW-1185">Reference proteome</keyword>
<keyword id="KW-0808">Transferase</keyword>
<keyword id="KW-0812">Transmembrane</keyword>
<keyword id="KW-1133">Transmembrane helix</keyword>
<keyword id="KW-0902">Two-component regulatory system</keyword>
<comment type="function">
    <text evidence="5">Member of the two-component regulatory system CseB/CseC involved in the stability of the cell envelope, through activation of transcription of RNA polymerase sigma-E factor. CseC functions as a membrane-associated protein kinase that phosphorylates CseB in response to changes in the cell envelope.</text>
</comment>
<comment type="catalytic activity">
    <reaction>
        <text>ATP + protein L-histidine = ADP + protein N-phospho-L-histidine.</text>
        <dbReference type="EC" id="2.7.13.3"/>
    </reaction>
</comment>
<comment type="subcellular location">
    <subcellularLocation>
        <location evidence="6">Cell membrane</location>
        <topology evidence="6">Multi-pass membrane protein</topology>
    </subcellularLocation>
</comment>
<protein>
    <recommendedName>
        <fullName>Sensor protein CseC</fullName>
        <ecNumber>2.7.13.3</ecNumber>
    </recommendedName>
</protein>
<reference key="1">
    <citation type="journal article" date="1999" name="Mol. Microbiol.">
        <title>A putative two-component signal transduction system regulates sigE, a sigma factor required for normal cell wall integrity in Streptomyces coelicolor A3(2).</title>
        <authorList>
            <person name="Paget M.S.B."/>
            <person name="Leibowitz E."/>
            <person name="Buttner M.J."/>
        </authorList>
    </citation>
    <scope>NUCLEOTIDE SEQUENCE [GENOMIC DNA]</scope>
    <scope>FUNCTION IN TRANSCRIPTIONAL ACTIVATION OF SIGMA E</scope>
    <source>
        <strain>A3(2) / M600</strain>
    </source>
</reference>
<reference key="2">
    <citation type="journal article" date="2002" name="Nature">
        <title>Complete genome sequence of the model actinomycete Streptomyces coelicolor A3(2).</title>
        <authorList>
            <person name="Bentley S.D."/>
            <person name="Chater K.F."/>
            <person name="Cerdeno-Tarraga A.-M."/>
            <person name="Challis G.L."/>
            <person name="Thomson N.R."/>
            <person name="James K.D."/>
            <person name="Harris D.E."/>
            <person name="Quail M.A."/>
            <person name="Kieser H."/>
            <person name="Harper D."/>
            <person name="Bateman A."/>
            <person name="Brown S."/>
            <person name="Chandra G."/>
            <person name="Chen C.W."/>
            <person name="Collins M."/>
            <person name="Cronin A."/>
            <person name="Fraser A."/>
            <person name="Goble A."/>
            <person name="Hidalgo J."/>
            <person name="Hornsby T."/>
            <person name="Howarth S."/>
            <person name="Huang C.-H."/>
            <person name="Kieser T."/>
            <person name="Larke L."/>
            <person name="Murphy L.D."/>
            <person name="Oliver K."/>
            <person name="O'Neil S."/>
            <person name="Rabbinowitsch E."/>
            <person name="Rajandream M.A."/>
            <person name="Rutherford K.M."/>
            <person name="Rutter S."/>
            <person name="Seeger K."/>
            <person name="Saunders D."/>
            <person name="Sharp S."/>
            <person name="Squares R."/>
            <person name="Squares S."/>
            <person name="Taylor K."/>
            <person name="Warren T."/>
            <person name="Wietzorrek A."/>
            <person name="Woodward J.R."/>
            <person name="Barrell B.G."/>
            <person name="Parkhill J."/>
            <person name="Hopwood D.A."/>
        </authorList>
    </citation>
    <scope>NUCLEOTIDE SEQUENCE [LARGE SCALE GENOMIC DNA]</scope>
    <source>
        <strain>ATCC BAA-471 / A3(2) / M145</strain>
    </source>
</reference>
<organism>
    <name type="scientific">Streptomyces coelicolor (strain ATCC BAA-471 / A3(2) / M145)</name>
    <dbReference type="NCBI Taxonomy" id="100226"/>
    <lineage>
        <taxon>Bacteria</taxon>
        <taxon>Bacillati</taxon>
        <taxon>Actinomycetota</taxon>
        <taxon>Actinomycetes</taxon>
        <taxon>Kitasatosporales</taxon>
        <taxon>Streptomycetaceae</taxon>
        <taxon>Streptomyces</taxon>
        <taxon>Streptomyces albidoflavus group</taxon>
    </lineage>
</organism>
<feature type="chain" id="PRO_0000314483" description="Sensor protein CseC">
    <location>
        <begin position="1"/>
        <end position="507"/>
    </location>
</feature>
<feature type="transmembrane region" description="Helical" evidence="1">
    <location>
        <begin position="60"/>
        <end position="80"/>
    </location>
</feature>
<feature type="transmembrane region" description="Helical" evidence="1">
    <location>
        <begin position="183"/>
        <end position="203"/>
    </location>
</feature>
<feature type="domain" description="HAMP" evidence="2">
    <location>
        <begin position="204"/>
        <end position="260"/>
    </location>
</feature>
<feature type="domain" description="Histidine kinase" evidence="3">
    <location>
        <begin position="268"/>
        <end position="470"/>
    </location>
</feature>
<feature type="region of interest" description="Disordered" evidence="4">
    <location>
        <begin position="1"/>
        <end position="42"/>
    </location>
</feature>
<feature type="region of interest" description="Disordered" evidence="4">
    <location>
        <begin position="472"/>
        <end position="507"/>
    </location>
</feature>
<feature type="compositionally biased region" description="Gly residues" evidence="4">
    <location>
        <begin position="25"/>
        <end position="37"/>
    </location>
</feature>
<feature type="compositionally biased region" description="Polar residues" evidence="4">
    <location>
        <begin position="486"/>
        <end position="507"/>
    </location>
</feature>
<feature type="modified residue" description="Phosphohistidine; by autocatalysis" evidence="3">
    <location>
        <position position="271"/>
    </location>
</feature>